<evidence type="ECO:0000255" key="1">
    <source>
        <dbReference type="HAMAP-Rule" id="MF_01633"/>
    </source>
</evidence>
<accession>A2S8H7</accession>
<feature type="chain" id="PRO_1000069755" description="7-cyano-7-deazaguanine synthase">
    <location>
        <begin position="1"/>
        <end position="244"/>
    </location>
</feature>
<feature type="binding site" evidence="1">
    <location>
        <begin position="14"/>
        <end position="24"/>
    </location>
    <ligand>
        <name>ATP</name>
        <dbReference type="ChEBI" id="CHEBI:30616"/>
    </ligand>
</feature>
<feature type="binding site" evidence="1">
    <location>
        <position position="202"/>
    </location>
    <ligand>
        <name>Zn(2+)</name>
        <dbReference type="ChEBI" id="CHEBI:29105"/>
    </ligand>
</feature>
<feature type="binding site" evidence="1">
    <location>
        <position position="217"/>
    </location>
    <ligand>
        <name>Zn(2+)</name>
        <dbReference type="ChEBI" id="CHEBI:29105"/>
    </ligand>
</feature>
<feature type="binding site" evidence="1">
    <location>
        <position position="220"/>
    </location>
    <ligand>
        <name>Zn(2+)</name>
        <dbReference type="ChEBI" id="CHEBI:29105"/>
    </ligand>
</feature>
<feature type="binding site" evidence="1">
    <location>
        <position position="223"/>
    </location>
    <ligand>
        <name>Zn(2+)</name>
        <dbReference type="ChEBI" id="CHEBI:29105"/>
    </ligand>
</feature>
<protein>
    <recommendedName>
        <fullName evidence="1">7-cyano-7-deazaguanine synthase</fullName>
        <ecNumber evidence="1">6.3.4.20</ecNumber>
    </recommendedName>
    <alternativeName>
        <fullName evidence="1">7-cyano-7-carbaguanine synthase</fullName>
    </alternativeName>
    <alternativeName>
        <fullName evidence="1">PreQ(0) synthase</fullName>
    </alternativeName>
    <alternativeName>
        <fullName evidence="1">Queuosine biosynthesis protein QueC</fullName>
    </alternativeName>
</protein>
<name>QUEC_BURM9</name>
<organism>
    <name type="scientific">Burkholderia mallei (strain NCTC 10229)</name>
    <dbReference type="NCBI Taxonomy" id="412022"/>
    <lineage>
        <taxon>Bacteria</taxon>
        <taxon>Pseudomonadati</taxon>
        <taxon>Pseudomonadota</taxon>
        <taxon>Betaproteobacteria</taxon>
        <taxon>Burkholderiales</taxon>
        <taxon>Burkholderiaceae</taxon>
        <taxon>Burkholderia</taxon>
        <taxon>pseudomallei group</taxon>
    </lineage>
</organism>
<gene>
    <name evidence="1" type="primary">queC</name>
    <name type="ordered locus">BMA10229_A2284</name>
</gene>
<proteinExistence type="inferred from homology"/>
<sequence length="244" mass="27142">MIRTDAKDGALVLFSGGQDSATCVAWALERYQTVETLGFDYGQRHRVELECREGVRDALKRRFPQWSHKLGDDHLIDLSVLGSISDTAMTRAIEIETASNGLPNTFVPGRNLLFMTIAAAIAYRRGLRALVGGMCETDFSGYPDCRDDTMKALQVALNLGMDTRFVLETPLMWLDKADTWRLAEQLGGAPLVELIRVETHTCYVGERSELHDWGFGCGECPACKLRKRGYDAYLRGESVTEAPA</sequence>
<dbReference type="EC" id="6.3.4.20" evidence="1"/>
<dbReference type="EMBL" id="CP000546">
    <property type="protein sequence ID" value="ABN03617.1"/>
    <property type="molecule type" value="Genomic_DNA"/>
</dbReference>
<dbReference type="RefSeq" id="WP_004190026.1">
    <property type="nucleotide sequence ID" value="NC_008836.1"/>
</dbReference>
<dbReference type="SMR" id="A2S8H7"/>
<dbReference type="GeneID" id="93058685"/>
<dbReference type="KEGG" id="bml:BMA10229_A2284"/>
<dbReference type="HOGENOM" id="CLU_081854_0_0_4"/>
<dbReference type="UniPathway" id="UPA00391"/>
<dbReference type="Proteomes" id="UP000002283">
    <property type="component" value="Chromosome I"/>
</dbReference>
<dbReference type="GO" id="GO:0005524">
    <property type="term" value="F:ATP binding"/>
    <property type="evidence" value="ECO:0007669"/>
    <property type="project" value="UniProtKB-UniRule"/>
</dbReference>
<dbReference type="GO" id="GO:0016879">
    <property type="term" value="F:ligase activity, forming carbon-nitrogen bonds"/>
    <property type="evidence" value="ECO:0007669"/>
    <property type="project" value="UniProtKB-UniRule"/>
</dbReference>
<dbReference type="GO" id="GO:0008270">
    <property type="term" value="F:zinc ion binding"/>
    <property type="evidence" value="ECO:0007669"/>
    <property type="project" value="UniProtKB-UniRule"/>
</dbReference>
<dbReference type="GO" id="GO:0008616">
    <property type="term" value="P:queuosine biosynthetic process"/>
    <property type="evidence" value="ECO:0007669"/>
    <property type="project" value="UniProtKB-UniRule"/>
</dbReference>
<dbReference type="CDD" id="cd01995">
    <property type="entry name" value="QueC-like"/>
    <property type="match status" value="1"/>
</dbReference>
<dbReference type="Gene3D" id="3.40.50.620">
    <property type="entry name" value="HUPs"/>
    <property type="match status" value="1"/>
</dbReference>
<dbReference type="HAMAP" id="MF_01633">
    <property type="entry name" value="QueC"/>
    <property type="match status" value="1"/>
</dbReference>
<dbReference type="InterPro" id="IPR018317">
    <property type="entry name" value="QueC"/>
</dbReference>
<dbReference type="InterPro" id="IPR014729">
    <property type="entry name" value="Rossmann-like_a/b/a_fold"/>
</dbReference>
<dbReference type="NCBIfam" id="TIGR00364">
    <property type="entry name" value="7-cyano-7-deazaguanine synthase QueC"/>
    <property type="match status" value="1"/>
</dbReference>
<dbReference type="PANTHER" id="PTHR42914">
    <property type="entry name" value="7-CYANO-7-DEAZAGUANINE SYNTHASE"/>
    <property type="match status" value="1"/>
</dbReference>
<dbReference type="PANTHER" id="PTHR42914:SF1">
    <property type="entry name" value="7-CYANO-7-DEAZAGUANINE SYNTHASE"/>
    <property type="match status" value="1"/>
</dbReference>
<dbReference type="Pfam" id="PF06508">
    <property type="entry name" value="QueC"/>
    <property type="match status" value="1"/>
</dbReference>
<dbReference type="PIRSF" id="PIRSF006293">
    <property type="entry name" value="ExsB"/>
    <property type="match status" value="1"/>
</dbReference>
<dbReference type="SUPFAM" id="SSF52402">
    <property type="entry name" value="Adenine nucleotide alpha hydrolases-like"/>
    <property type="match status" value="1"/>
</dbReference>
<comment type="function">
    <text evidence="1">Catalyzes the ATP-dependent conversion of 7-carboxy-7-deazaguanine (CDG) to 7-cyano-7-deazaguanine (preQ(0)).</text>
</comment>
<comment type="catalytic activity">
    <reaction evidence="1">
        <text>7-carboxy-7-deazaguanine + NH4(+) + ATP = 7-cyano-7-deazaguanine + ADP + phosphate + H2O + H(+)</text>
        <dbReference type="Rhea" id="RHEA:27982"/>
        <dbReference type="ChEBI" id="CHEBI:15377"/>
        <dbReference type="ChEBI" id="CHEBI:15378"/>
        <dbReference type="ChEBI" id="CHEBI:28938"/>
        <dbReference type="ChEBI" id="CHEBI:30616"/>
        <dbReference type="ChEBI" id="CHEBI:43474"/>
        <dbReference type="ChEBI" id="CHEBI:45075"/>
        <dbReference type="ChEBI" id="CHEBI:61036"/>
        <dbReference type="ChEBI" id="CHEBI:456216"/>
        <dbReference type="EC" id="6.3.4.20"/>
    </reaction>
</comment>
<comment type="cofactor">
    <cofactor evidence="1">
        <name>Zn(2+)</name>
        <dbReference type="ChEBI" id="CHEBI:29105"/>
    </cofactor>
    <text evidence="1">Binds 1 zinc ion per subunit.</text>
</comment>
<comment type="pathway">
    <text evidence="1">Purine metabolism; 7-cyano-7-deazaguanine biosynthesis.</text>
</comment>
<comment type="similarity">
    <text evidence="1">Belongs to the QueC family.</text>
</comment>
<keyword id="KW-0067">ATP-binding</keyword>
<keyword id="KW-0436">Ligase</keyword>
<keyword id="KW-0479">Metal-binding</keyword>
<keyword id="KW-0547">Nucleotide-binding</keyword>
<keyword id="KW-0671">Queuosine biosynthesis</keyword>
<keyword id="KW-0862">Zinc</keyword>
<reference key="1">
    <citation type="journal article" date="2010" name="Genome Biol. Evol.">
        <title>Continuing evolution of Burkholderia mallei through genome reduction and large-scale rearrangements.</title>
        <authorList>
            <person name="Losada L."/>
            <person name="Ronning C.M."/>
            <person name="DeShazer D."/>
            <person name="Woods D."/>
            <person name="Fedorova N."/>
            <person name="Kim H.S."/>
            <person name="Shabalina S.A."/>
            <person name="Pearson T.R."/>
            <person name="Brinkac L."/>
            <person name="Tan P."/>
            <person name="Nandi T."/>
            <person name="Crabtree J."/>
            <person name="Badger J."/>
            <person name="Beckstrom-Sternberg S."/>
            <person name="Saqib M."/>
            <person name="Schutzer S.E."/>
            <person name="Keim P."/>
            <person name="Nierman W.C."/>
        </authorList>
    </citation>
    <scope>NUCLEOTIDE SEQUENCE [LARGE SCALE GENOMIC DNA]</scope>
    <source>
        <strain>NCTC 10229</strain>
    </source>
</reference>